<accession>C4Z3J5</accession>
<reference key="1">
    <citation type="journal article" date="2009" name="Proc. Natl. Acad. Sci. U.S.A.">
        <title>Characterizing a model human gut microbiota composed of members of its two dominant bacterial phyla.</title>
        <authorList>
            <person name="Mahowald M.A."/>
            <person name="Rey F.E."/>
            <person name="Seedorf H."/>
            <person name="Turnbaugh P.J."/>
            <person name="Fulton R.S."/>
            <person name="Wollam A."/>
            <person name="Shah N."/>
            <person name="Wang C."/>
            <person name="Magrini V."/>
            <person name="Wilson R.K."/>
            <person name="Cantarel B.L."/>
            <person name="Coutinho P.M."/>
            <person name="Henrissat B."/>
            <person name="Crock L.W."/>
            <person name="Russell A."/>
            <person name="Verberkmoes N.C."/>
            <person name="Hettich R.L."/>
            <person name="Gordon J.I."/>
        </authorList>
    </citation>
    <scope>NUCLEOTIDE SEQUENCE [LARGE SCALE GENOMIC DNA]</scope>
    <source>
        <strain>ATCC 27750 / DSM 3376 / VPI C15-48 / C15-B4</strain>
    </source>
</reference>
<protein>
    <recommendedName>
        <fullName evidence="1">Aspartyl/glutamyl-tRNA(Asn/Gln) amidotransferase subunit B</fullName>
        <shortName evidence="1">Asp/Glu-ADT subunit B</shortName>
        <ecNumber evidence="1">6.3.5.-</ecNumber>
    </recommendedName>
</protein>
<gene>
    <name evidence="1" type="primary">gatB</name>
    <name type="ordered locus">EUBELI_00448</name>
</gene>
<keyword id="KW-0067">ATP-binding</keyword>
<keyword id="KW-0436">Ligase</keyword>
<keyword id="KW-0547">Nucleotide-binding</keyword>
<keyword id="KW-0648">Protein biosynthesis</keyword>
<keyword id="KW-1185">Reference proteome</keyword>
<name>GATB_LACE2</name>
<organism>
    <name type="scientific">Lachnospira eligens (strain ATCC 27750 / DSM 3376 / VPI C15-48 / C15-B4)</name>
    <name type="common">Eubacterium eligens</name>
    <dbReference type="NCBI Taxonomy" id="515620"/>
    <lineage>
        <taxon>Bacteria</taxon>
        <taxon>Bacillati</taxon>
        <taxon>Bacillota</taxon>
        <taxon>Clostridia</taxon>
        <taxon>Lachnospirales</taxon>
        <taxon>Lachnospiraceae</taxon>
        <taxon>Lachnospira</taxon>
    </lineage>
</organism>
<proteinExistence type="inferred from homology"/>
<evidence type="ECO:0000255" key="1">
    <source>
        <dbReference type="HAMAP-Rule" id="MF_00121"/>
    </source>
</evidence>
<comment type="function">
    <text evidence="1">Allows the formation of correctly charged Asn-tRNA(Asn) or Gln-tRNA(Gln) through the transamidation of misacylated Asp-tRNA(Asn) or Glu-tRNA(Gln) in organisms which lack either or both of asparaginyl-tRNA or glutaminyl-tRNA synthetases. The reaction takes place in the presence of glutamine and ATP through an activated phospho-Asp-tRNA(Asn) or phospho-Glu-tRNA(Gln).</text>
</comment>
<comment type="catalytic activity">
    <reaction evidence="1">
        <text>L-glutamyl-tRNA(Gln) + L-glutamine + ATP + H2O = L-glutaminyl-tRNA(Gln) + L-glutamate + ADP + phosphate + H(+)</text>
        <dbReference type="Rhea" id="RHEA:17521"/>
        <dbReference type="Rhea" id="RHEA-COMP:9681"/>
        <dbReference type="Rhea" id="RHEA-COMP:9684"/>
        <dbReference type="ChEBI" id="CHEBI:15377"/>
        <dbReference type="ChEBI" id="CHEBI:15378"/>
        <dbReference type="ChEBI" id="CHEBI:29985"/>
        <dbReference type="ChEBI" id="CHEBI:30616"/>
        <dbReference type="ChEBI" id="CHEBI:43474"/>
        <dbReference type="ChEBI" id="CHEBI:58359"/>
        <dbReference type="ChEBI" id="CHEBI:78520"/>
        <dbReference type="ChEBI" id="CHEBI:78521"/>
        <dbReference type="ChEBI" id="CHEBI:456216"/>
    </reaction>
</comment>
<comment type="catalytic activity">
    <reaction evidence="1">
        <text>L-aspartyl-tRNA(Asn) + L-glutamine + ATP + H2O = L-asparaginyl-tRNA(Asn) + L-glutamate + ADP + phosphate + 2 H(+)</text>
        <dbReference type="Rhea" id="RHEA:14513"/>
        <dbReference type="Rhea" id="RHEA-COMP:9674"/>
        <dbReference type="Rhea" id="RHEA-COMP:9677"/>
        <dbReference type="ChEBI" id="CHEBI:15377"/>
        <dbReference type="ChEBI" id="CHEBI:15378"/>
        <dbReference type="ChEBI" id="CHEBI:29985"/>
        <dbReference type="ChEBI" id="CHEBI:30616"/>
        <dbReference type="ChEBI" id="CHEBI:43474"/>
        <dbReference type="ChEBI" id="CHEBI:58359"/>
        <dbReference type="ChEBI" id="CHEBI:78515"/>
        <dbReference type="ChEBI" id="CHEBI:78516"/>
        <dbReference type="ChEBI" id="CHEBI:456216"/>
    </reaction>
</comment>
<comment type="subunit">
    <text evidence="1">Heterotrimer of A, B and C subunits.</text>
</comment>
<comment type="similarity">
    <text evidence="1">Belongs to the GatB/GatE family. GatB subfamily.</text>
</comment>
<feature type="chain" id="PRO_1000203052" description="Aspartyl/glutamyl-tRNA(Asn/Gln) amidotransferase subunit B">
    <location>
        <begin position="1"/>
        <end position="483"/>
    </location>
</feature>
<dbReference type="EC" id="6.3.5.-" evidence="1"/>
<dbReference type="EMBL" id="CP001104">
    <property type="protein sequence ID" value="ACR71464.1"/>
    <property type="molecule type" value="Genomic_DNA"/>
</dbReference>
<dbReference type="RefSeq" id="WP_012738700.1">
    <property type="nucleotide sequence ID" value="NC_012778.1"/>
</dbReference>
<dbReference type="SMR" id="C4Z3J5"/>
<dbReference type="STRING" id="515620.EUBELI_00448"/>
<dbReference type="GeneID" id="41355212"/>
<dbReference type="KEGG" id="eel:EUBELI_00448"/>
<dbReference type="eggNOG" id="COG0064">
    <property type="taxonomic scope" value="Bacteria"/>
</dbReference>
<dbReference type="HOGENOM" id="CLU_019240_0_0_9"/>
<dbReference type="Proteomes" id="UP000001476">
    <property type="component" value="Chromosome"/>
</dbReference>
<dbReference type="GO" id="GO:0050566">
    <property type="term" value="F:asparaginyl-tRNA synthase (glutamine-hydrolyzing) activity"/>
    <property type="evidence" value="ECO:0007669"/>
    <property type="project" value="RHEA"/>
</dbReference>
<dbReference type="GO" id="GO:0005524">
    <property type="term" value="F:ATP binding"/>
    <property type="evidence" value="ECO:0007669"/>
    <property type="project" value="UniProtKB-KW"/>
</dbReference>
<dbReference type="GO" id="GO:0050567">
    <property type="term" value="F:glutaminyl-tRNA synthase (glutamine-hydrolyzing) activity"/>
    <property type="evidence" value="ECO:0007669"/>
    <property type="project" value="UniProtKB-UniRule"/>
</dbReference>
<dbReference type="GO" id="GO:0070681">
    <property type="term" value="P:glutaminyl-tRNAGln biosynthesis via transamidation"/>
    <property type="evidence" value="ECO:0007669"/>
    <property type="project" value="TreeGrafter"/>
</dbReference>
<dbReference type="GO" id="GO:0006412">
    <property type="term" value="P:translation"/>
    <property type="evidence" value="ECO:0007669"/>
    <property type="project" value="UniProtKB-UniRule"/>
</dbReference>
<dbReference type="FunFam" id="1.10.10.410:FF:000001">
    <property type="entry name" value="Aspartyl/glutamyl-tRNA(Asn/Gln) amidotransferase subunit B"/>
    <property type="match status" value="1"/>
</dbReference>
<dbReference type="FunFam" id="1.10.150.380:FF:000001">
    <property type="entry name" value="Aspartyl/glutamyl-tRNA(Asn/Gln) amidotransferase subunit B"/>
    <property type="match status" value="1"/>
</dbReference>
<dbReference type="Gene3D" id="1.10.10.410">
    <property type="match status" value="1"/>
</dbReference>
<dbReference type="Gene3D" id="1.10.150.380">
    <property type="entry name" value="GatB domain, N-terminal subdomain"/>
    <property type="match status" value="1"/>
</dbReference>
<dbReference type="HAMAP" id="MF_00121">
    <property type="entry name" value="GatB"/>
    <property type="match status" value="1"/>
</dbReference>
<dbReference type="InterPro" id="IPR017959">
    <property type="entry name" value="Asn/Gln-tRNA_amidoTrfase_suB/E"/>
</dbReference>
<dbReference type="InterPro" id="IPR006075">
    <property type="entry name" value="Asn/Gln-tRNA_Trfase_suB/E_cat"/>
</dbReference>
<dbReference type="InterPro" id="IPR018027">
    <property type="entry name" value="Asn/Gln_amidotransferase"/>
</dbReference>
<dbReference type="InterPro" id="IPR003789">
    <property type="entry name" value="Asn/Gln_tRNA_amidoTrase-B-like"/>
</dbReference>
<dbReference type="InterPro" id="IPR004413">
    <property type="entry name" value="GatB"/>
</dbReference>
<dbReference type="InterPro" id="IPR042114">
    <property type="entry name" value="GatB_C_1"/>
</dbReference>
<dbReference type="InterPro" id="IPR023168">
    <property type="entry name" value="GatB_Yqey_C_2"/>
</dbReference>
<dbReference type="InterPro" id="IPR017958">
    <property type="entry name" value="Gln-tRNA_amidoTrfase_suB_CS"/>
</dbReference>
<dbReference type="InterPro" id="IPR014746">
    <property type="entry name" value="Gln_synth/guanido_kin_cat_dom"/>
</dbReference>
<dbReference type="NCBIfam" id="TIGR00133">
    <property type="entry name" value="gatB"/>
    <property type="match status" value="1"/>
</dbReference>
<dbReference type="NCBIfam" id="NF004012">
    <property type="entry name" value="PRK05477.1-2"/>
    <property type="match status" value="1"/>
</dbReference>
<dbReference type="NCBIfam" id="NF004014">
    <property type="entry name" value="PRK05477.1-4"/>
    <property type="match status" value="1"/>
</dbReference>
<dbReference type="PANTHER" id="PTHR11659">
    <property type="entry name" value="GLUTAMYL-TRNA GLN AMIDOTRANSFERASE SUBUNIT B MITOCHONDRIAL AND PROKARYOTIC PET112-RELATED"/>
    <property type="match status" value="1"/>
</dbReference>
<dbReference type="PANTHER" id="PTHR11659:SF0">
    <property type="entry name" value="GLUTAMYL-TRNA(GLN) AMIDOTRANSFERASE SUBUNIT B, MITOCHONDRIAL"/>
    <property type="match status" value="1"/>
</dbReference>
<dbReference type="Pfam" id="PF02934">
    <property type="entry name" value="GatB_N"/>
    <property type="match status" value="1"/>
</dbReference>
<dbReference type="Pfam" id="PF02637">
    <property type="entry name" value="GatB_Yqey"/>
    <property type="match status" value="1"/>
</dbReference>
<dbReference type="SMART" id="SM00845">
    <property type="entry name" value="GatB_Yqey"/>
    <property type="match status" value="1"/>
</dbReference>
<dbReference type="SUPFAM" id="SSF89095">
    <property type="entry name" value="GatB/YqeY motif"/>
    <property type="match status" value="1"/>
</dbReference>
<dbReference type="SUPFAM" id="SSF55931">
    <property type="entry name" value="Glutamine synthetase/guanido kinase"/>
    <property type="match status" value="1"/>
</dbReference>
<dbReference type="PROSITE" id="PS01234">
    <property type="entry name" value="GATB"/>
    <property type="match status" value="1"/>
</dbReference>
<sequence>MKDYEVVIGLEVHVELATKTKIFCGCSTEFGGAPNSHTCPVCTGMPGSLPVLNKKVVEYAAAVGLATNCTITQDCKFDRKNYFYPDNPQNYQISQLYLPICRNGHVDVTLSDGTEKTIRIHEIHMEEDAGKLVHDEWEGVSYVDYNRSGVPLIEIVSEPDMRSAEEVIAYLTKLRTTIQYLGASDCKLQEGSMRADVNLSVRERGSNEFGTRTETKNLNSFAAIERAIKAETARQIDLIEAGEKVVQETRRWNDDKEYSYAMRSKEDAQDYRYFPDPDLVPIHISDEYLAELKAKQPEFKDEKKARYIEEFGLPEYDAEILTDSKKFTEIFEEATAICNQPKKVSNWIMGETMRLMKEESAKTGREFRAEELTFSPESLAKIITLVEKKEINNAAAKEIFEHVFAENVDVDAYVEEHGLKQVNDEGALRATVEKVIADNPQSVADYKGGKKQAIGYLVGQTMKAMQGKANPGMVNALLQELLK</sequence>